<comment type="function">
    <text evidence="1">Catalyzes the condensation reaction of fatty acid synthesis by the addition to an acyl acceptor of two carbons from malonyl-ACP. Catalyzes the first condensation reaction which initiates fatty acid synthesis and may therefore play a role in governing the total rate of fatty acid production. Possesses both acetoacetyl-ACP synthase and acetyl transacylase activities. Its substrate specificity determines the biosynthesis of branched-chain and/or straight-chain of fatty acids.</text>
</comment>
<comment type="catalytic activity">
    <reaction evidence="1">
        <text>malonyl-[ACP] + acetyl-CoA + H(+) = 3-oxobutanoyl-[ACP] + CO2 + CoA</text>
        <dbReference type="Rhea" id="RHEA:12080"/>
        <dbReference type="Rhea" id="RHEA-COMP:9623"/>
        <dbReference type="Rhea" id="RHEA-COMP:9625"/>
        <dbReference type="ChEBI" id="CHEBI:15378"/>
        <dbReference type="ChEBI" id="CHEBI:16526"/>
        <dbReference type="ChEBI" id="CHEBI:57287"/>
        <dbReference type="ChEBI" id="CHEBI:57288"/>
        <dbReference type="ChEBI" id="CHEBI:78449"/>
        <dbReference type="ChEBI" id="CHEBI:78450"/>
        <dbReference type="EC" id="2.3.1.180"/>
    </reaction>
</comment>
<comment type="pathway">
    <text evidence="1">Lipid metabolism; fatty acid biosynthesis.</text>
</comment>
<comment type="subunit">
    <text evidence="1">Homodimer.</text>
</comment>
<comment type="subcellular location">
    <subcellularLocation>
        <location evidence="1">Cytoplasm</location>
    </subcellularLocation>
</comment>
<comment type="domain">
    <text evidence="1">The last Arg residue of the ACP-binding site is essential for the weak association between ACP/AcpP and FabH.</text>
</comment>
<comment type="similarity">
    <text evidence="1">Belongs to the thiolase-like superfamily. FabH family.</text>
</comment>
<protein>
    <recommendedName>
        <fullName evidence="1">Beta-ketoacyl-[acyl-carrier-protein] synthase III</fullName>
        <shortName evidence="1">Beta-ketoacyl-ACP synthase III</shortName>
        <shortName evidence="1">KAS III</shortName>
        <ecNumber evidence="1">2.3.1.180</ecNumber>
    </recommendedName>
    <alternativeName>
        <fullName evidence="1">3-oxoacyl-[acyl-carrier-protein] synthase 3</fullName>
    </alternativeName>
    <alternativeName>
        <fullName evidence="1">3-oxoacyl-[acyl-carrier-protein] synthase III</fullName>
    </alternativeName>
</protein>
<proteinExistence type="inferred from homology"/>
<sequence length="319" mass="34493">MKRSTILGIGSYLPKKIVTNDELALTVETSDEWIVKRTGIKQRHIAENNEMTSDMAANAARLALTDACVHKDDIGLIIVATTTPDRTFPSCATIVQDKLECKNAFAFDIQAVCSGFVYAISIADNFIKSGQVNTALVIGAEIMSRILDWQDRSTCVLFGDGAGAVVLGNNSEKDSGIISTILHSDGAFCDLLYTTGGTAYNGHAGTICMNGTIVFEHAIEKLSASILEILDQNDLEINDVDWFVLHQANIRIIELVARRLKIPYEKMVVSVNWHGNTSAASIPLALSYAKSSGKLKKHDIAILAAIGGGFTWGTCLVRI</sequence>
<reference key="1">
    <citation type="journal article" date="2006" name="PLoS Genet.">
        <title>Comparative genomics of emerging human ehrlichiosis agents.</title>
        <authorList>
            <person name="Dunning Hotopp J.C."/>
            <person name="Lin M."/>
            <person name="Madupu R."/>
            <person name="Crabtree J."/>
            <person name="Angiuoli S.V."/>
            <person name="Eisen J.A."/>
            <person name="Seshadri R."/>
            <person name="Ren Q."/>
            <person name="Wu M."/>
            <person name="Utterback T.R."/>
            <person name="Smith S."/>
            <person name="Lewis M."/>
            <person name="Khouri H."/>
            <person name="Zhang C."/>
            <person name="Niu H."/>
            <person name="Lin Q."/>
            <person name="Ohashi N."/>
            <person name="Zhi N."/>
            <person name="Nelson W.C."/>
            <person name="Brinkac L.M."/>
            <person name="Dodson R.J."/>
            <person name="Rosovitz M.J."/>
            <person name="Sundaram J.P."/>
            <person name="Daugherty S.C."/>
            <person name="Davidsen T."/>
            <person name="Durkin A.S."/>
            <person name="Gwinn M.L."/>
            <person name="Haft D.H."/>
            <person name="Selengut J.D."/>
            <person name="Sullivan S.A."/>
            <person name="Zafar N."/>
            <person name="Zhou L."/>
            <person name="Benahmed F."/>
            <person name="Forberger H."/>
            <person name="Halpin R."/>
            <person name="Mulligan S."/>
            <person name="Robinson J."/>
            <person name="White O."/>
            <person name="Rikihisa Y."/>
            <person name="Tettelin H."/>
        </authorList>
    </citation>
    <scope>NUCLEOTIDE SEQUENCE [LARGE SCALE GENOMIC DNA]</scope>
    <source>
        <strain>ATCC CRL-10679 / Arkansas</strain>
    </source>
</reference>
<name>FABH_EHRCR</name>
<evidence type="ECO:0000255" key="1">
    <source>
        <dbReference type="HAMAP-Rule" id="MF_01815"/>
    </source>
</evidence>
<keyword id="KW-0012">Acyltransferase</keyword>
<keyword id="KW-0963">Cytoplasm</keyword>
<keyword id="KW-0275">Fatty acid biosynthesis</keyword>
<keyword id="KW-0276">Fatty acid metabolism</keyword>
<keyword id="KW-0444">Lipid biosynthesis</keyword>
<keyword id="KW-0443">Lipid metabolism</keyword>
<keyword id="KW-0511">Multifunctional enzyme</keyword>
<keyword id="KW-1185">Reference proteome</keyword>
<keyword id="KW-0808">Transferase</keyword>
<feature type="chain" id="PRO_1000056358" description="Beta-ketoacyl-[acyl-carrier-protein] synthase III">
    <location>
        <begin position="1"/>
        <end position="319"/>
    </location>
</feature>
<feature type="region of interest" description="ACP-binding" evidence="1">
    <location>
        <begin position="247"/>
        <end position="251"/>
    </location>
</feature>
<feature type="active site" evidence="1">
    <location>
        <position position="113"/>
    </location>
</feature>
<feature type="active site" evidence="1">
    <location>
        <position position="246"/>
    </location>
</feature>
<feature type="active site" evidence="1">
    <location>
        <position position="276"/>
    </location>
</feature>
<organism>
    <name type="scientific">Ehrlichia chaffeensis (strain ATCC CRL-10679 / Arkansas)</name>
    <dbReference type="NCBI Taxonomy" id="205920"/>
    <lineage>
        <taxon>Bacteria</taxon>
        <taxon>Pseudomonadati</taxon>
        <taxon>Pseudomonadota</taxon>
        <taxon>Alphaproteobacteria</taxon>
        <taxon>Rickettsiales</taxon>
        <taxon>Anaplasmataceae</taxon>
        <taxon>Ehrlichia</taxon>
    </lineage>
</organism>
<dbReference type="EC" id="2.3.1.180" evidence="1"/>
<dbReference type="EMBL" id="CP000236">
    <property type="protein sequence ID" value="ABD45059.1"/>
    <property type="molecule type" value="Genomic_DNA"/>
</dbReference>
<dbReference type="RefSeq" id="WP_011452611.1">
    <property type="nucleotide sequence ID" value="NC_007799.1"/>
</dbReference>
<dbReference type="SMR" id="Q2GH17"/>
<dbReference type="STRING" id="205920.ECH_0448"/>
<dbReference type="KEGG" id="ech:ECH_0448"/>
<dbReference type="eggNOG" id="COG0332">
    <property type="taxonomic scope" value="Bacteria"/>
</dbReference>
<dbReference type="HOGENOM" id="CLU_039592_3_1_5"/>
<dbReference type="OrthoDB" id="9815506at2"/>
<dbReference type="UniPathway" id="UPA00094"/>
<dbReference type="Proteomes" id="UP000008320">
    <property type="component" value="Chromosome"/>
</dbReference>
<dbReference type="GO" id="GO:0005737">
    <property type="term" value="C:cytoplasm"/>
    <property type="evidence" value="ECO:0007669"/>
    <property type="project" value="UniProtKB-SubCell"/>
</dbReference>
<dbReference type="GO" id="GO:0004315">
    <property type="term" value="F:3-oxoacyl-[acyl-carrier-protein] synthase activity"/>
    <property type="evidence" value="ECO:0007669"/>
    <property type="project" value="InterPro"/>
</dbReference>
<dbReference type="GO" id="GO:0033818">
    <property type="term" value="F:beta-ketoacyl-acyl-carrier-protein synthase III activity"/>
    <property type="evidence" value="ECO:0007669"/>
    <property type="project" value="UniProtKB-UniRule"/>
</dbReference>
<dbReference type="GO" id="GO:0006633">
    <property type="term" value="P:fatty acid biosynthetic process"/>
    <property type="evidence" value="ECO:0007669"/>
    <property type="project" value="UniProtKB-UniRule"/>
</dbReference>
<dbReference type="GO" id="GO:0044550">
    <property type="term" value="P:secondary metabolite biosynthetic process"/>
    <property type="evidence" value="ECO:0007669"/>
    <property type="project" value="TreeGrafter"/>
</dbReference>
<dbReference type="CDD" id="cd00830">
    <property type="entry name" value="KAS_III"/>
    <property type="match status" value="1"/>
</dbReference>
<dbReference type="FunFam" id="3.40.47.10:FF:000004">
    <property type="entry name" value="3-oxoacyl-[acyl-carrier-protein] synthase 3"/>
    <property type="match status" value="1"/>
</dbReference>
<dbReference type="Gene3D" id="3.40.47.10">
    <property type="match status" value="1"/>
</dbReference>
<dbReference type="HAMAP" id="MF_01815">
    <property type="entry name" value="FabH"/>
    <property type="match status" value="1"/>
</dbReference>
<dbReference type="InterPro" id="IPR013747">
    <property type="entry name" value="ACP_syn_III_C"/>
</dbReference>
<dbReference type="InterPro" id="IPR013751">
    <property type="entry name" value="ACP_syn_III_N"/>
</dbReference>
<dbReference type="InterPro" id="IPR004655">
    <property type="entry name" value="FabH"/>
</dbReference>
<dbReference type="InterPro" id="IPR016039">
    <property type="entry name" value="Thiolase-like"/>
</dbReference>
<dbReference type="NCBIfam" id="TIGR00747">
    <property type="entry name" value="fabH"/>
    <property type="match status" value="1"/>
</dbReference>
<dbReference type="NCBIfam" id="NF006829">
    <property type="entry name" value="PRK09352.1"/>
    <property type="match status" value="1"/>
</dbReference>
<dbReference type="PANTHER" id="PTHR34069">
    <property type="entry name" value="3-OXOACYL-[ACYL-CARRIER-PROTEIN] SYNTHASE 3"/>
    <property type="match status" value="1"/>
</dbReference>
<dbReference type="PANTHER" id="PTHR34069:SF2">
    <property type="entry name" value="BETA-KETOACYL-[ACYL-CARRIER-PROTEIN] SYNTHASE III"/>
    <property type="match status" value="1"/>
</dbReference>
<dbReference type="Pfam" id="PF08545">
    <property type="entry name" value="ACP_syn_III"/>
    <property type="match status" value="1"/>
</dbReference>
<dbReference type="Pfam" id="PF08541">
    <property type="entry name" value="ACP_syn_III_C"/>
    <property type="match status" value="1"/>
</dbReference>
<dbReference type="SUPFAM" id="SSF53901">
    <property type="entry name" value="Thiolase-like"/>
    <property type="match status" value="1"/>
</dbReference>
<gene>
    <name evidence="1" type="primary">fabH</name>
    <name type="ordered locus">ECH_0448</name>
</gene>
<accession>Q2GH17</accession>